<keyword id="KW-1003">Cell membrane</keyword>
<keyword id="KW-0472">Membrane</keyword>
<keyword id="KW-0520">NAD</keyword>
<keyword id="KW-0874">Quinone</keyword>
<keyword id="KW-1185">Reference proteome</keyword>
<keyword id="KW-1278">Translocase</keyword>
<keyword id="KW-0812">Transmembrane</keyword>
<keyword id="KW-1133">Transmembrane helix</keyword>
<sequence>MTTFGHDTWWLVAAKAIAVFVFLMLTVLVAILAERKLLGRMQLRPGPNRVGPKGALQSLADGIKLALKESITPGGIDRFVYFVAPIISVIPAFTAFAFIPFGPEVSVFGHRTPLQITDLPVAVLFILGLSAIGVYGIVLGGWASGSTYPLLGGVRSTAQVISYEVAMGLSFATVFLMAGTMSTSQIVAAQDGVWYAFLLLPSFVIYLISMVGETNRAPFDLPEAEGELVAGFHTEYSSLKFAMFMLAEYVNMTTVSALAATLFFGGWHAPWPLNMWASANTGWWPLIWFTAKVWGFLFIYFWLRATLPRLRYDQFMALGWKLLIPVSLVWVMVAAIIRSLRNQGYQYWTPTLVFSSIVVAAAMVLLLRKPLSAPGARASARQRGDEGTSPEPAFPTPPLLAGATKENAGG</sequence>
<name>NUOH_MYCBO</name>
<accession>P65562</accession>
<accession>A0A1R3Y396</accession>
<accession>P95174</accession>
<accession>X2BME9</accession>
<gene>
    <name evidence="1" type="primary">nuoH</name>
    <name type="ordered locus">BQ2027_MB3176</name>
</gene>
<dbReference type="EC" id="7.1.1.-" evidence="1"/>
<dbReference type="EMBL" id="LT708304">
    <property type="protein sequence ID" value="SIU01803.1"/>
    <property type="molecule type" value="Genomic_DNA"/>
</dbReference>
<dbReference type="RefSeq" id="NP_856821.1">
    <property type="nucleotide sequence ID" value="NC_002945.3"/>
</dbReference>
<dbReference type="RefSeq" id="WP_003416445.1">
    <property type="nucleotide sequence ID" value="NC_002945.4"/>
</dbReference>
<dbReference type="SMR" id="P65562"/>
<dbReference type="GeneID" id="45427139"/>
<dbReference type="KEGG" id="mbo:BQ2027_MB3176"/>
<dbReference type="PATRIC" id="fig|233413.5.peg.3494"/>
<dbReference type="Proteomes" id="UP000001419">
    <property type="component" value="Chromosome"/>
</dbReference>
<dbReference type="GO" id="GO:0005886">
    <property type="term" value="C:plasma membrane"/>
    <property type="evidence" value="ECO:0007669"/>
    <property type="project" value="UniProtKB-SubCell"/>
</dbReference>
<dbReference type="GO" id="GO:0003954">
    <property type="term" value="F:NADH dehydrogenase activity"/>
    <property type="evidence" value="ECO:0007669"/>
    <property type="project" value="TreeGrafter"/>
</dbReference>
<dbReference type="GO" id="GO:0016655">
    <property type="term" value="F:oxidoreductase activity, acting on NAD(P)H, quinone or similar compound as acceptor"/>
    <property type="evidence" value="ECO:0007669"/>
    <property type="project" value="UniProtKB-UniRule"/>
</dbReference>
<dbReference type="GO" id="GO:0048038">
    <property type="term" value="F:quinone binding"/>
    <property type="evidence" value="ECO:0007669"/>
    <property type="project" value="UniProtKB-KW"/>
</dbReference>
<dbReference type="GO" id="GO:0009060">
    <property type="term" value="P:aerobic respiration"/>
    <property type="evidence" value="ECO:0007669"/>
    <property type="project" value="TreeGrafter"/>
</dbReference>
<dbReference type="HAMAP" id="MF_01350">
    <property type="entry name" value="NDH1_NuoH"/>
    <property type="match status" value="1"/>
</dbReference>
<dbReference type="InterPro" id="IPR001694">
    <property type="entry name" value="NADH_UbQ_OxRdtase_su1/FPO"/>
</dbReference>
<dbReference type="InterPro" id="IPR018086">
    <property type="entry name" value="NADH_UbQ_OxRdtase_su1_CS"/>
</dbReference>
<dbReference type="NCBIfam" id="NF004741">
    <property type="entry name" value="PRK06076.1-2"/>
    <property type="match status" value="1"/>
</dbReference>
<dbReference type="NCBIfam" id="NF004743">
    <property type="entry name" value="PRK06076.1-4"/>
    <property type="match status" value="1"/>
</dbReference>
<dbReference type="PANTHER" id="PTHR11432">
    <property type="entry name" value="NADH DEHYDROGENASE SUBUNIT 1"/>
    <property type="match status" value="1"/>
</dbReference>
<dbReference type="PANTHER" id="PTHR11432:SF3">
    <property type="entry name" value="NADH-UBIQUINONE OXIDOREDUCTASE CHAIN 1"/>
    <property type="match status" value="1"/>
</dbReference>
<dbReference type="Pfam" id="PF00146">
    <property type="entry name" value="NADHdh"/>
    <property type="match status" value="1"/>
</dbReference>
<dbReference type="PROSITE" id="PS00667">
    <property type="entry name" value="COMPLEX1_ND1_1"/>
    <property type="match status" value="1"/>
</dbReference>
<dbReference type="PROSITE" id="PS00668">
    <property type="entry name" value="COMPLEX1_ND1_2"/>
    <property type="match status" value="1"/>
</dbReference>
<protein>
    <recommendedName>
        <fullName evidence="1">NADH-quinone oxidoreductase subunit H</fullName>
        <ecNumber evidence="1">7.1.1.-</ecNumber>
    </recommendedName>
    <alternativeName>
        <fullName evidence="1">NADH dehydrogenase I subunit H</fullName>
    </alternativeName>
    <alternativeName>
        <fullName evidence="1">NDH-1 subunit H</fullName>
    </alternativeName>
</protein>
<evidence type="ECO:0000255" key="1">
    <source>
        <dbReference type="HAMAP-Rule" id="MF_01350"/>
    </source>
</evidence>
<evidence type="ECO:0000256" key="2">
    <source>
        <dbReference type="SAM" id="MobiDB-lite"/>
    </source>
</evidence>
<reference key="1">
    <citation type="journal article" date="2003" name="Proc. Natl. Acad. Sci. U.S.A.">
        <title>The complete genome sequence of Mycobacterium bovis.</title>
        <authorList>
            <person name="Garnier T."/>
            <person name="Eiglmeier K."/>
            <person name="Camus J.-C."/>
            <person name="Medina N."/>
            <person name="Mansoor H."/>
            <person name="Pryor M."/>
            <person name="Duthoy S."/>
            <person name="Grondin S."/>
            <person name="Lacroix C."/>
            <person name="Monsempe C."/>
            <person name="Simon S."/>
            <person name="Harris B."/>
            <person name="Atkin R."/>
            <person name="Doggett J."/>
            <person name="Mayes R."/>
            <person name="Keating L."/>
            <person name="Wheeler P.R."/>
            <person name="Parkhill J."/>
            <person name="Barrell B.G."/>
            <person name="Cole S.T."/>
            <person name="Gordon S.V."/>
            <person name="Hewinson R.G."/>
        </authorList>
    </citation>
    <scope>NUCLEOTIDE SEQUENCE [LARGE SCALE GENOMIC DNA]</scope>
    <source>
        <strain>ATCC BAA-935 / AF2122/97</strain>
    </source>
</reference>
<reference key="2">
    <citation type="journal article" date="2017" name="Genome Announc.">
        <title>Updated reference genome sequence and annotation of Mycobacterium bovis AF2122/97.</title>
        <authorList>
            <person name="Malone K.M."/>
            <person name="Farrell D."/>
            <person name="Stuber T.P."/>
            <person name="Schubert O.T."/>
            <person name="Aebersold R."/>
            <person name="Robbe-Austerman S."/>
            <person name="Gordon S.V."/>
        </authorList>
    </citation>
    <scope>NUCLEOTIDE SEQUENCE [LARGE SCALE GENOMIC DNA]</scope>
    <scope>GENOME REANNOTATION</scope>
    <source>
        <strain>ATCC BAA-935 / AF2122/97</strain>
    </source>
</reference>
<feature type="chain" id="PRO_0000117530" description="NADH-quinone oxidoreductase subunit H">
    <location>
        <begin position="1"/>
        <end position="410"/>
    </location>
</feature>
<feature type="transmembrane region" description="Helical" evidence="1">
    <location>
        <begin position="11"/>
        <end position="31"/>
    </location>
</feature>
<feature type="transmembrane region" description="Helical" evidence="1">
    <location>
        <begin position="79"/>
        <end position="99"/>
    </location>
</feature>
<feature type="transmembrane region" description="Helical" evidence="1">
    <location>
        <begin position="119"/>
        <end position="139"/>
    </location>
</feature>
<feature type="transmembrane region" description="Helical" evidence="1">
    <location>
        <begin position="160"/>
        <end position="180"/>
    </location>
</feature>
<feature type="transmembrane region" description="Helical" evidence="1">
    <location>
        <begin position="192"/>
        <end position="212"/>
    </location>
</feature>
<feature type="transmembrane region" description="Helical" evidence="1">
    <location>
        <begin position="257"/>
        <end position="277"/>
    </location>
</feature>
<feature type="transmembrane region" description="Helical" evidence="1">
    <location>
        <begin position="283"/>
        <end position="303"/>
    </location>
</feature>
<feature type="transmembrane region" description="Helical" evidence="1">
    <location>
        <begin position="317"/>
        <end position="337"/>
    </location>
</feature>
<feature type="transmembrane region" description="Helical" evidence="1">
    <location>
        <begin position="347"/>
        <end position="367"/>
    </location>
</feature>
<feature type="region of interest" description="Disordered" evidence="2">
    <location>
        <begin position="376"/>
        <end position="410"/>
    </location>
</feature>
<organism>
    <name type="scientific">Mycobacterium bovis (strain ATCC BAA-935 / AF2122/97)</name>
    <dbReference type="NCBI Taxonomy" id="233413"/>
    <lineage>
        <taxon>Bacteria</taxon>
        <taxon>Bacillati</taxon>
        <taxon>Actinomycetota</taxon>
        <taxon>Actinomycetes</taxon>
        <taxon>Mycobacteriales</taxon>
        <taxon>Mycobacteriaceae</taxon>
        <taxon>Mycobacterium</taxon>
        <taxon>Mycobacterium tuberculosis complex</taxon>
    </lineage>
</organism>
<comment type="function">
    <text evidence="1">NDH-1 shuttles electrons from NADH, via FMN and iron-sulfur (Fe-S) centers, to quinones in the respiratory chain. The immediate electron acceptor for the enzyme in this species is believed to be menaquinone. Couples the redox reaction to proton translocation (for every two electrons transferred, four hydrogen ions are translocated across the cytoplasmic membrane), and thus conserves the redox energy in a proton gradient.</text>
</comment>
<comment type="catalytic activity">
    <reaction evidence="1">
        <text>a quinone + NADH + 5 H(+)(in) = a quinol + NAD(+) + 4 H(+)(out)</text>
        <dbReference type="Rhea" id="RHEA:57888"/>
        <dbReference type="ChEBI" id="CHEBI:15378"/>
        <dbReference type="ChEBI" id="CHEBI:24646"/>
        <dbReference type="ChEBI" id="CHEBI:57540"/>
        <dbReference type="ChEBI" id="CHEBI:57945"/>
        <dbReference type="ChEBI" id="CHEBI:132124"/>
    </reaction>
</comment>
<comment type="subunit">
    <text evidence="1">NDH-1 is composed of 14 different subunits. Subunits NuoA, H, J, K, L, M, N constitute the membrane sector of the complex.</text>
</comment>
<comment type="subcellular location">
    <subcellularLocation>
        <location>Cell membrane</location>
        <topology>Multi-pass membrane protein</topology>
    </subcellularLocation>
</comment>
<comment type="similarity">
    <text evidence="1">Belongs to the complex I subunit 1 family.</text>
</comment>
<proteinExistence type="inferred from homology"/>